<reference key="1">
    <citation type="journal article" date="2008" name="Nucleic Acids Res.">
        <title>The complete nucleotide sequences of the five genetically distinct plastid genomes of Oenothera, subsection Oenothera: I. Sequence evaluation and plastome evolution.</title>
        <authorList>
            <person name="Greiner S."/>
            <person name="Wang X."/>
            <person name="Rauwolf U."/>
            <person name="Silber M.V."/>
            <person name="Mayer K."/>
            <person name="Meurer J."/>
            <person name="Haberer G."/>
            <person name="Herrmann R.G."/>
        </authorList>
    </citation>
    <scope>NUCLEOTIDE SEQUENCE [LARGE SCALE GENOMIC DNA]</scope>
    <source>
        <strain>cv. Atrovirens</strain>
    </source>
</reference>
<organism>
    <name type="scientific">Oenothera parviflora</name>
    <name type="common">Small-flowered evening primrose</name>
    <name type="synonym">Oenothera cruciata</name>
    <dbReference type="NCBI Taxonomy" id="482429"/>
    <lineage>
        <taxon>Eukaryota</taxon>
        <taxon>Viridiplantae</taxon>
        <taxon>Streptophyta</taxon>
        <taxon>Embryophyta</taxon>
        <taxon>Tracheophyta</taxon>
        <taxon>Spermatophyta</taxon>
        <taxon>Magnoliopsida</taxon>
        <taxon>eudicotyledons</taxon>
        <taxon>Gunneridae</taxon>
        <taxon>Pentapetalae</taxon>
        <taxon>rosids</taxon>
        <taxon>malvids</taxon>
        <taxon>Myrtales</taxon>
        <taxon>Onagraceae</taxon>
        <taxon>Onagroideae</taxon>
        <taxon>Onagreae</taxon>
        <taxon>Oenothera</taxon>
    </lineage>
</organism>
<dbReference type="EMBL" id="EU262891">
    <property type="protein sequence ID" value="ABX10141.1"/>
    <property type="molecule type" value="Genomic_DNA"/>
</dbReference>
<dbReference type="RefSeq" id="YP_001687471.1">
    <property type="nucleotide sequence ID" value="NC_010362.1"/>
</dbReference>
<dbReference type="SMR" id="B0Z5E8"/>
<dbReference type="GeneID" id="5955402"/>
<dbReference type="GO" id="GO:0009535">
    <property type="term" value="C:chloroplast thylakoid membrane"/>
    <property type="evidence" value="ECO:0007669"/>
    <property type="project" value="UniProtKB-SubCell"/>
</dbReference>
<dbReference type="GO" id="GO:0009522">
    <property type="term" value="C:photosystem I"/>
    <property type="evidence" value="ECO:0007669"/>
    <property type="project" value="UniProtKB-KW"/>
</dbReference>
<dbReference type="GO" id="GO:0015979">
    <property type="term" value="P:photosynthesis"/>
    <property type="evidence" value="ECO:0007669"/>
    <property type="project" value="UniProtKB-UniRule"/>
</dbReference>
<dbReference type="FunFam" id="1.20.5.510:FF:000001">
    <property type="entry name" value="Photosystem I reaction center subunit IX"/>
    <property type="match status" value="1"/>
</dbReference>
<dbReference type="Gene3D" id="1.20.5.510">
    <property type="entry name" value="Single helix bin"/>
    <property type="match status" value="1"/>
</dbReference>
<dbReference type="HAMAP" id="MF_00522">
    <property type="entry name" value="PSI_PsaJ"/>
    <property type="match status" value="1"/>
</dbReference>
<dbReference type="InterPro" id="IPR002615">
    <property type="entry name" value="PSI_PsaJ"/>
</dbReference>
<dbReference type="InterPro" id="IPR036062">
    <property type="entry name" value="PSI_PsaJ_sf"/>
</dbReference>
<dbReference type="PANTHER" id="PTHR36082">
    <property type="match status" value="1"/>
</dbReference>
<dbReference type="PANTHER" id="PTHR36082:SF2">
    <property type="entry name" value="PHOTOSYSTEM I REACTION CENTER SUBUNIT IX"/>
    <property type="match status" value="1"/>
</dbReference>
<dbReference type="Pfam" id="PF01701">
    <property type="entry name" value="PSI_PsaJ"/>
    <property type="match status" value="1"/>
</dbReference>
<dbReference type="SUPFAM" id="SSF81544">
    <property type="entry name" value="Subunit IX of photosystem I reaction centre, PsaJ"/>
    <property type="match status" value="1"/>
</dbReference>
<accession>B0Z5E8</accession>
<name>PSAJ_OENPA</name>
<comment type="function">
    <text evidence="1">May help in the organization of the PsaE and PsaF subunits.</text>
</comment>
<comment type="subcellular location">
    <subcellularLocation>
        <location evidence="1">Plastid</location>
        <location evidence="1">Chloroplast thylakoid membrane</location>
        <topology evidence="1">Single-pass membrane protein</topology>
    </subcellularLocation>
</comment>
<comment type="similarity">
    <text evidence="1">Belongs to the PsaJ family.</text>
</comment>
<protein>
    <recommendedName>
        <fullName evidence="1">Photosystem I reaction center subunit IX</fullName>
    </recommendedName>
    <alternativeName>
        <fullName evidence="1">PSI-J</fullName>
    </alternativeName>
</protein>
<evidence type="ECO:0000255" key="1">
    <source>
        <dbReference type="HAMAP-Rule" id="MF_00522"/>
    </source>
</evidence>
<proteinExistence type="inferred from homology"/>
<keyword id="KW-0150">Chloroplast</keyword>
<keyword id="KW-0472">Membrane</keyword>
<keyword id="KW-0602">Photosynthesis</keyword>
<keyword id="KW-0603">Photosystem I</keyword>
<keyword id="KW-0934">Plastid</keyword>
<keyword id="KW-0793">Thylakoid</keyword>
<keyword id="KW-0812">Transmembrane</keyword>
<keyword id="KW-1133">Transmembrane helix</keyword>
<gene>
    <name evidence="1" type="primary">psaJ</name>
</gene>
<geneLocation type="chloroplast"/>
<sequence>MRDLKTYLSVAPVLSALWFGALAGLLIEINRFFPDALTFPFFS</sequence>
<feature type="chain" id="PRO_0000354165" description="Photosystem I reaction center subunit IX">
    <location>
        <begin position="1"/>
        <end position="43"/>
    </location>
</feature>
<feature type="transmembrane region" description="Helical" evidence="1">
    <location>
        <begin position="7"/>
        <end position="27"/>
    </location>
</feature>